<dbReference type="EMBL" id="BA000054">
    <property type="protein sequence ID" value="BAE64224.1"/>
    <property type="molecule type" value="Genomic_DNA"/>
</dbReference>
<dbReference type="RefSeq" id="XP_001825357.1">
    <property type="nucleotide sequence ID" value="XM_001825305.3"/>
</dbReference>
<dbReference type="SMR" id="Q2U2J1"/>
<dbReference type="STRING" id="510516.Q2U2J1"/>
<dbReference type="EnsemblFungi" id="BAE64224">
    <property type="protein sequence ID" value="BAE64224"/>
    <property type="gene ID" value="AO090038000435"/>
</dbReference>
<dbReference type="GeneID" id="5997452"/>
<dbReference type="KEGG" id="aor:AO090038000435"/>
<dbReference type="VEuPathDB" id="FungiDB:AO090038000435"/>
<dbReference type="HOGENOM" id="CLU_044094_1_0_1"/>
<dbReference type="OMA" id="WYQSTYF"/>
<dbReference type="OrthoDB" id="69693at5052"/>
<dbReference type="Proteomes" id="UP000006564">
    <property type="component" value="Chromosome 6"/>
</dbReference>
<dbReference type="GO" id="GO:0016282">
    <property type="term" value="C:eukaryotic 43S preinitiation complex"/>
    <property type="evidence" value="ECO:0007669"/>
    <property type="project" value="UniProtKB-UniRule"/>
</dbReference>
<dbReference type="GO" id="GO:0033290">
    <property type="term" value="C:eukaryotic 48S preinitiation complex"/>
    <property type="evidence" value="ECO:0007669"/>
    <property type="project" value="UniProtKB-UniRule"/>
</dbReference>
<dbReference type="GO" id="GO:0005852">
    <property type="term" value="C:eukaryotic translation initiation factor 3 complex"/>
    <property type="evidence" value="ECO:0007669"/>
    <property type="project" value="UniProtKB-UniRule"/>
</dbReference>
<dbReference type="GO" id="GO:0008237">
    <property type="term" value="F:metallopeptidase activity"/>
    <property type="evidence" value="ECO:0007669"/>
    <property type="project" value="InterPro"/>
</dbReference>
<dbReference type="GO" id="GO:0003743">
    <property type="term" value="F:translation initiation factor activity"/>
    <property type="evidence" value="ECO:0007669"/>
    <property type="project" value="UniProtKB-UniRule"/>
</dbReference>
<dbReference type="GO" id="GO:0001732">
    <property type="term" value="P:formation of cytoplasmic translation initiation complex"/>
    <property type="evidence" value="ECO:0007669"/>
    <property type="project" value="UniProtKB-UniRule"/>
</dbReference>
<dbReference type="CDD" id="cd08065">
    <property type="entry name" value="MPN_eIF3h"/>
    <property type="match status" value="1"/>
</dbReference>
<dbReference type="FunFam" id="3.40.140.10:FF:000052">
    <property type="entry name" value="Eukaryotic translation initiation factor 3 subunit H"/>
    <property type="match status" value="1"/>
</dbReference>
<dbReference type="Gene3D" id="3.40.140.10">
    <property type="entry name" value="Cytidine Deaminase, domain 2"/>
    <property type="match status" value="1"/>
</dbReference>
<dbReference type="HAMAP" id="MF_03007">
    <property type="entry name" value="eIF3h"/>
    <property type="match status" value="1"/>
</dbReference>
<dbReference type="InterPro" id="IPR027524">
    <property type="entry name" value="eIF3h"/>
</dbReference>
<dbReference type="InterPro" id="IPR045810">
    <property type="entry name" value="eIF3h_C"/>
</dbReference>
<dbReference type="InterPro" id="IPR000555">
    <property type="entry name" value="JAMM/MPN+_dom"/>
</dbReference>
<dbReference type="InterPro" id="IPR050242">
    <property type="entry name" value="JAMM_MPN+_peptidase_M67A"/>
</dbReference>
<dbReference type="InterPro" id="IPR037518">
    <property type="entry name" value="MPN"/>
</dbReference>
<dbReference type="PANTHER" id="PTHR10410">
    <property type="entry name" value="EUKARYOTIC TRANSLATION INITIATION FACTOR 3 -RELATED"/>
    <property type="match status" value="1"/>
</dbReference>
<dbReference type="Pfam" id="PF19445">
    <property type="entry name" value="eIF3h_C"/>
    <property type="match status" value="1"/>
</dbReference>
<dbReference type="Pfam" id="PF01398">
    <property type="entry name" value="JAB"/>
    <property type="match status" value="1"/>
</dbReference>
<dbReference type="SMART" id="SM00232">
    <property type="entry name" value="JAB_MPN"/>
    <property type="match status" value="1"/>
</dbReference>
<dbReference type="PROSITE" id="PS50249">
    <property type="entry name" value="MPN"/>
    <property type="match status" value="1"/>
</dbReference>
<feature type="chain" id="PRO_0000365203" description="Eukaryotic translation initiation factor 3 subunit H">
    <location>
        <begin position="1"/>
        <end position="365"/>
    </location>
</feature>
<feature type="domain" description="MPN" evidence="2">
    <location>
        <begin position="11"/>
        <end position="160"/>
    </location>
</feature>
<accession>Q2U2J1</accession>
<sequence>MAEKEVPLTAVKVDALVVMKIIKHSSQSFPTTATGSIVGMDVDGTLEITNSFPFPVVEMPADSHFDNAAPNPAAAAPRAKANVAYQAEMIRMLREVNVDANNVGWYTSANMGNFVNMNVIENQFFYQKEMNERTVALVHDVSRSAQGSLSLRAFRLSSKFMTAFKENKFTSEELQKSSLRHQDIFVELPVEIHNSHLITTFIHQLQCPSQSTPTDLPPSLAALEKSSFVKDSVLAPNFDNLSLSIDPFLEKNCDLLLDSIETHHTETNNFQYYQRSLAREQAKITAWQAKRKAENASRAALKQPLLPEDEYQRLFKLPQEPSRLETMLNTRQVEQYSRQIDSFVSATTGKMFAVKGNLLPGETAK</sequence>
<protein>
    <recommendedName>
        <fullName evidence="1">Eukaryotic translation initiation factor 3 subunit H</fullName>
        <shortName evidence="1">eIF3h</shortName>
    </recommendedName>
</protein>
<keyword id="KW-0963">Cytoplasm</keyword>
<keyword id="KW-0396">Initiation factor</keyword>
<keyword id="KW-0648">Protein biosynthesis</keyword>
<keyword id="KW-1185">Reference proteome</keyword>
<proteinExistence type="inferred from homology"/>
<comment type="function">
    <text evidence="1">Component of the eukaryotic translation initiation factor 3 (eIF-3) complex, which is involved in protein synthesis of a specialized repertoire of mRNAs and, together with other initiation factors, stimulates binding of mRNA and methionyl-tRNAi to the 40S ribosome. The eIF-3 complex specifically targets and initiates translation of a subset of mRNAs involved in cell proliferation.</text>
</comment>
<comment type="subunit">
    <text evidence="1">Component of the eukaryotic translation initiation factor 3 (eIF-3) complex.</text>
</comment>
<comment type="subcellular location">
    <subcellularLocation>
        <location evidence="1">Cytoplasm</location>
    </subcellularLocation>
</comment>
<comment type="similarity">
    <text evidence="1">Belongs to the eIF-3 subunit H family.</text>
</comment>
<organism>
    <name type="scientific">Aspergillus oryzae (strain ATCC 42149 / RIB 40)</name>
    <name type="common">Yellow koji mold</name>
    <dbReference type="NCBI Taxonomy" id="510516"/>
    <lineage>
        <taxon>Eukaryota</taxon>
        <taxon>Fungi</taxon>
        <taxon>Dikarya</taxon>
        <taxon>Ascomycota</taxon>
        <taxon>Pezizomycotina</taxon>
        <taxon>Eurotiomycetes</taxon>
        <taxon>Eurotiomycetidae</taxon>
        <taxon>Eurotiales</taxon>
        <taxon>Aspergillaceae</taxon>
        <taxon>Aspergillus</taxon>
        <taxon>Aspergillus subgen. Circumdati</taxon>
    </lineage>
</organism>
<name>EIF3H_ASPOR</name>
<gene>
    <name type="ORF">AO090038000435</name>
</gene>
<evidence type="ECO:0000255" key="1">
    <source>
        <dbReference type="HAMAP-Rule" id="MF_03007"/>
    </source>
</evidence>
<evidence type="ECO:0000255" key="2">
    <source>
        <dbReference type="PROSITE-ProRule" id="PRU01182"/>
    </source>
</evidence>
<reference key="1">
    <citation type="journal article" date="2005" name="Nature">
        <title>Genome sequencing and analysis of Aspergillus oryzae.</title>
        <authorList>
            <person name="Machida M."/>
            <person name="Asai K."/>
            <person name="Sano M."/>
            <person name="Tanaka T."/>
            <person name="Kumagai T."/>
            <person name="Terai G."/>
            <person name="Kusumoto K."/>
            <person name="Arima T."/>
            <person name="Akita O."/>
            <person name="Kashiwagi Y."/>
            <person name="Abe K."/>
            <person name="Gomi K."/>
            <person name="Horiuchi H."/>
            <person name="Kitamoto K."/>
            <person name="Kobayashi T."/>
            <person name="Takeuchi M."/>
            <person name="Denning D.W."/>
            <person name="Galagan J.E."/>
            <person name="Nierman W.C."/>
            <person name="Yu J."/>
            <person name="Archer D.B."/>
            <person name="Bennett J.W."/>
            <person name="Bhatnagar D."/>
            <person name="Cleveland T.E."/>
            <person name="Fedorova N.D."/>
            <person name="Gotoh O."/>
            <person name="Horikawa H."/>
            <person name="Hosoyama A."/>
            <person name="Ichinomiya M."/>
            <person name="Igarashi R."/>
            <person name="Iwashita K."/>
            <person name="Juvvadi P.R."/>
            <person name="Kato M."/>
            <person name="Kato Y."/>
            <person name="Kin T."/>
            <person name="Kokubun A."/>
            <person name="Maeda H."/>
            <person name="Maeyama N."/>
            <person name="Maruyama J."/>
            <person name="Nagasaki H."/>
            <person name="Nakajima T."/>
            <person name="Oda K."/>
            <person name="Okada K."/>
            <person name="Paulsen I."/>
            <person name="Sakamoto K."/>
            <person name="Sawano T."/>
            <person name="Takahashi M."/>
            <person name="Takase K."/>
            <person name="Terabayashi Y."/>
            <person name="Wortman J.R."/>
            <person name="Yamada O."/>
            <person name="Yamagata Y."/>
            <person name="Anazawa H."/>
            <person name="Hata Y."/>
            <person name="Koide Y."/>
            <person name="Komori T."/>
            <person name="Koyama Y."/>
            <person name="Minetoki T."/>
            <person name="Suharnan S."/>
            <person name="Tanaka A."/>
            <person name="Isono K."/>
            <person name="Kuhara S."/>
            <person name="Ogasawara N."/>
            <person name="Kikuchi H."/>
        </authorList>
    </citation>
    <scope>NUCLEOTIDE SEQUENCE [LARGE SCALE GENOMIC DNA]</scope>
    <source>
        <strain>ATCC 42149 / RIB 40</strain>
    </source>
</reference>